<comment type="function">
    <text evidence="1 3">Binds to sodium channels (Nav) and inhibits the inactivation of the activated channels, thereby blocking neuronal transmission (By similarity). Tested on mice, has antitumor effect and strong inhibitory effect on pain.</text>
</comment>
<comment type="subcellular location">
    <subcellularLocation>
        <location evidence="1">Secreted</location>
    </subcellularLocation>
</comment>
<comment type="tissue specificity">
    <text>Expressed by the venom gland.</text>
</comment>
<comment type="domain">
    <text evidence="4">Has the structural arrangement of an alpha-helix connected to antiparallel beta-sheets by disulfide bonds (CS-alpha/beta).</text>
</comment>
<comment type="similarity">
    <text evidence="4">Belongs to the long (4 C-C) scorpion toxin superfamily. Sodium channel inhibitor family. Alpha subfamily.</text>
</comment>
<protein>
    <recommendedName>
        <fullName>Toxin BmKT</fullName>
        <shortName>BmK T</shortName>
    </recommendedName>
    <alternativeName>
        <fullName>Antitumor-analgesic peptide</fullName>
        <shortName>AGAP</shortName>
        <shortName>AGSP</shortName>
    </alternativeName>
</protein>
<keyword id="KW-1015">Disulfide bond</keyword>
<keyword id="KW-0872">Ion channel impairing toxin</keyword>
<keyword id="KW-0528">Neurotoxin</keyword>
<keyword id="KW-0964">Secreted</keyword>
<keyword id="KW-0732">Signal</keyword>
<keyword id="KW-0800">Toxin</keyword>
<keyword id="KW-0738">Voltage-gated sodium channel impairing toxin</keyword>
<proteinExistence type="evidence at transcript level"/>
<feature type="signal peptide" evidence="1">
    <location>
        <begin position="1"/>
        <end position="19"/>
    </location>
</feature>
<feature type="chain" id="PRO_0000035259" description="Toxin BmKT">
    <location>
        <begin position="20"/>
        <end position="85"/>
    </location>
</feature>
<feature type="domain" description="LCN-type CS-alpha/beta" evidence="2">
    <location>
        <begin position="21"/>
        <end position="83"/>
    </location>
</feature>
<feature type="disulfide bond" evidence="2">
    <location>
        <begin position="31"/>
        <end position="82"/>
    </location>
</feature>
<feature type="disulfide bond" evidence="2">
    <location>
        <begin position="35"/>
        <end position="55"/>
    </location>
</feature>
<feature type="disulfide bond" evidence="2">
    <location>
        <begin position="41"/>
        <end position="65"/>
    </location>
</feature>
<feature type="disulfide bond" evidence="2">
    <location>
        <begin position="45"/>
        <end position="67"/>
    </location>
</feature>
<organism>
    <name type="scientific">Olivierus martensii</name>
    <name type="common">Manchurian scorpion</name>
    <name type="synonym">Mesobuthus martensii</name>
    <dbReference type="NCBI Taxonomy" id="34649"/>
    <lineage>
        <taxon>Eukaryota</taxon>
        <taxon>Metazoa</taxon>
        <taxon>Ecdysozoa</taxon>
        <taxon>Arthropoda</taxon>
        <taxon>Chelicerata</taxon>
        <taxon>Arachnida</taxon>
        <taxon>Scorpiones</taxon>
        <taxon>Buthida</taxon>
        <taxon>Buthoidea</taxon>
        <taxon>Buthidae</taxon>
        <taxon>Olivierus</taxon>
    </lineage>
</organism>
<dbReference type="EMBL" id="AF370023">
    <property type="protein sequence ID" value="AAK53809.1"/>
    <property type="molecule type" value="mRNA"/>
</dbReference>
<dbReference type="EMBL" id="AF464898">
    <property type="protein sequence ID" value="AAP34332.1"/>
    <property type="molecule type" value="mRNA"/>
</dbReference>
<dbReference type="SMR" id="Q95P69"/>
<dbReference type="GO" id="GO:0005576">
    <property type="term" value="C:extracellular region"/>
    <property type="evidence" value="ECO:0007669"/>
    <property type="project" value="UniProtKB-SubCell"/>
</dbReference>
<dbReference type="GO" id="GO:0019871">
    <property type="term" value="F:sodium channel inhibitor activity"/>
    <property type="evidence" value="ECO:0007669"/>
    <property type="project" value="InterPro"/>
</dbReference>
<dbReference type="GO" id="GO:0090729">
    <property type="term" value="F:toxin activity"/>
    <property type="evidence" value="ECO:0007669"/>
    <property type="project" value="UniProtKB-KW"/>
</dbReference>
<dbReference type="GO" id="GO:0006952">
    <property type="term" value="P:defense response"/>
    <property type="evidence" value="ECO:0007669"/>
    <property type="project" value="InterPro"/>
</dbReference>
<dbReference type="CDD" id="cd23106">
    <property type="entry name" value="neurotoxins_LC_scorpion"/>
    <property type="match status" value="1"/>
</dbReference>
<dbReference type="FunFam" id="3.30.30.10:FF:000002">
    <property type="entry name" value="Alpha-like toxin BmK-M1"/>
    <property type="match status" value="1"/>
</dbReference>
<dbReference type="Gene3D" id="3.30.30.10">
    <property type="entry name" value="Knottin, scorpion toxin-like"/>
    <property type="match status" value="1"/>
</dbReference>
<dbReference type="InterPro" id="IPR044062">
    <property type="entry name" value="LCN-type_CS_alpha_beta_dom"/>
</dbReference>
<dbReference type="InterPro" id="IPR003614">
    <property type="entry name" value="Scorpion_toxin-like"/>
</dbReference>
<dbReference type="InterPro" id="IPR036574">
    <property type="entry name" value="Scorpion_toxin-like_sf"/>
</dbReference>
<dbReference type="InterPro" id="IPR018218">
    <property type="entry name" value="Scorpion_toxinL"/>
</dbReference>
<dbReference type="InterPro" id="IPR002061">
    <property type="entry name" value="Scorpion_toxinL/defensin"/>
</dbReference>
<dbReference type="Pfam" id="PF00537">
    <property type="entry name" value="Toxin_3"/>
    <property type="match status" value="1"/>
</dbReference>
<dbReference type="PRINTS" id="PR00285">
    <property type="entry name" value="SCORPNTOXIN"/>
</dbReference>
<dbReference type="PRINTS" id="PR00284">
    <property type="entry name" value="TOXIN"/>
</dbReference>
<dbReference type="SMART" id="SM00505">
    <property type="entry name" value="Knot1"/>
    <property type="match status" value="1"/>
</dbReference>
<dbReference type="SUPFAM" id="SSF57095">
    <property type="entry name" value="Scorpion toxin-like"/>
    <property type="match status" value="1"/>
</dbReference>
<dbReference type="PROSITE" id="PS51863">
    <property type="entry name" value="LCN_CSAB"/>
    <property type="match status" value="1"/>
</dbReference>
<evidence type="ECO:0000250" key="1"/>
<evidence type="ECO:0000255" key="2">
    <source>
        <dbReference type="PROSITE-ProRule" id="PRU01210"/>
    </source>
</evidence>
<evidence type="ECO:0000269" key="3">
    <source>
    </source>
</evidence>
<evidence type="ECO:0000305" key="4"/>
<sequence length="85" mass="9412">MNYLVFFSLALLLMTGVESVRDGYIADDKNCAYFCGRNAYCDDECKKNGAESGYCQWAGVYGNACWCYKLPDKVPIRVPGKCNGG</sequence>
<reference key="1">
    <citation type="journal article" date="2000" name="Toxicon">
        <title>Cloning and characterization of the cDNA sequences of two venom peptides from Chinese scorpion Buthus martensii Karsch (BmK).</title>
        <authorList>
            <person name="Zeng X.-C."/>
            <person name="Li W.-X."/>
            <person name="Zhu S.-Y."/>
            <person name="Peng F."/>
            <person name="Jiang D.-H."/>
            <person name="Yang F.-H."/>
            <person name="Wu K.-L."/>
        </authorList>
    </citation>
    <scope>NUCLEOTIDE SEQUENCE [MRNA]</scope>
    <scope>FUNCTION</scope>
    <source>
        <tissue>Venom gland</tissue>
    </source>
</reference>
<reference key="2">
    <citation type="journal article" date="2003" name="Protein Expr. Purif.">
        <title>Expression of an antitumor-analgesic peptide from the venom of Chinese scorpion Buthus martensii karsch in Escherichia coli.</title>
        <authorList>
            <person name="Liu Y.-F."/>
            <person name="Ma R.-L."/>
            <person name="Wang S.-L."/>
            <person name="Duan Z.-Y."/>
            <person name="Zhang J.-H."/>
            <person name="Wu L.-J."/>
            <person name="Wu C.-F."/>
        </authorList>
    </citation>
    <scope>NUCLEOTIDE SEQUENCE [MRNA]</scope>
</reference>
<accession>Q95P69</accession>
<name>SCAA_OLIMR</name>